<keyword id="KW-1003">Cell membrane</keyword>
<keyword id="KW-0472">Membrane</keyword>
<keyword id="KW-0812">Transmembrane</keyword>
<keyword id="KW-1133">Transmembrane helix</keyword>
<sequence>MDWLAKYWWILVIVFLVGVLLNVIKDLKRVDHKKFLANKPELPPHRDFNDKWDDDDDWPKKDQPKK</sequence>
<proteinExistence type="inferred from homology"/>
<evidence type="ECO:0000255" key="1">
    <source>
        <dbReference type="HAMAP-Rule" id="MF_01566"/>
    </source>
</evidence>
<evidence type="ECO:0000256" key="2">
    <source>
        <dbReference type="SAM" id="MobiDB-lite"/>
    </source>
</evidence>
<organism>
    <name type="scientific">Escherichia coli O7:K1 (strain IAI39 / ExPEC)</name>
    <dbReference type="NCBI Taxonomy" id="585057"/>
    <lineage>
        <taxon>Bacteria</taxon>
        <taxon>Pseudomonadati</taxon>
        <taxon>Pseudomonadota</taxon>
        <taxon>Gammaproteobacteria</taxon>
        <taxon>Enterobacterales</taxon>
        <taxon>Enterobacteriaceae</taxon>
        <taxon>Escherichia</taxon>
    </lineage>
</organism>
<dbReference type="EMBL" id="CU928164">
    <property type="protein sequence ID" value="CAR18735.1"/>
    <property type="molecule type" value="Genomic_DNA"/>
</dbReference>
<dbReference type="RefSeq" id="WP_000383836.1">
    <property type="nucleotide sequence ID" value="NC_011750.1"/>
</dbReference>
<dbReference type="RefSeq" id="YP_002408559.1">
    <property type="nucleotide sequence ID" value="NC_011750.1"/>
</dbReference>
<dbReference type="SMR" id="B7NQL0"/>
<dbReference type="STRING" id="585057.ECIAI39_2611"/>
<dbReference type="KEGG" id="ect:ECIAI39_2611"/>
<dbReference type="PATRIC" id="fig|585057.6.peg.2716"/>
<dbReference type="HOGENOM" id="CLU_198936_0_0_6"/>
<dbReference type="Proteomes" id="UP000000749">
    <property type="component" value="Chromosome"/>
</dbReference>
<dbReference type="GO" id="GO:0005886">
    <property type="term" value="C:plasma membrane"/>
    <property type="evidence" value="ECO:0007669"/>
    <property type="project" value="UniProtKB-SubCell"/>
</dbReference>
<dbReference type="HAMAP" id="MF_01566">
    <property type="entry name" value="UPF0370"/>
    <property type="match status" value="1"/>
</dbReference>
<dbReference type="InterPro" id="IPR020910">
    <property type="entry name" value="UPF0370"/>
</dbReference>
<dbReference type="NCBIfam" id="NF010185">
    <property type="entry name" value="PRK13664.1"/>
    <property type="match status" value="1"/>
</dbReference>
<dbReference type="Pfam" id="PF13980">
    <property type="entry name" value="UPF0370"/>
    <property type="match status" value="1"/>
</dbReference>
<comment type="subcellular location">
    <subcellularLocation>
        <location evidence="1">Cell membrane</location>
        <topology evidence="1">Single-pass membrane protein</topology>
    </subcellularLocation>
</comment>
<comment type="similarity">
    <text evidence="1">Belongs to the UPF0370 family.</text>
</comment>
<reference key="1">
    <citation type="journal article" date="2009" name="PLoS Genet.">
        <title>Organised genome dynamics in the Escherichia coli species results in highly diverse adaptive paths.</title>
        <authorList>
            <person name="Touchon M."/>
            <person name="Hoede C."/>
            <person name="Tenaillon O."/>
            <person name="Barbe V."/>
            <person name="Baeriswyl S."/>
            <person name="Bidet P."/>
            <person name="Bingen E."/>
            <person name="Bonacorsi S."/>
            <person name="Bouchier C."/>
            <person name="Bouvet O."/>
            <person name="Calteau A."/>
            <person name="Chiapello H."/>
            <person name="Clermont O."/>
            <person name="Cruveiller S."/>
            <person name="Danchin A."/>
            <person name="Diard M."/>
            <person name="Dossat C."/>
            <person name="Karoui M.E."/>
            <person name="Frapy E."/>
            <person name="Garry L."/>
            <person name="Ghigo J.M."/>
            <person name="Gilles A.M."/>
            <person name="Johnson J."/>
            <person name="Le Bouguenec C."/>
            <person name="Lescat M."/>
            <person name="Mangenot S."/>
            <person name="Martinez-Jehanne V."/>
            <person name="Matic I."/>
            <person name="Nassif X."/>
            <person name="Oztas S."/>
            <person name="Petit M.A."/>
            <person name="Pichon C."/>
            <person name="Rouy Z."/>
            <person name="Ruf C.S."/>
            <person name="Schneider D."/>
            <person name="Tourret J."/>
            <person name="Vacherie B."/>
            <person name="Vallenet D."/>
            <person name="Medigue C."/>
            <person name="Rocha E.P.C."/>
            <person name="Denamur E."/>
        </authorList>
    </citation>
    <scope>NUCLEOTIDE SEQUENCE [LARGE SCALE GENOMIC DNA]</scope>
    <source>
        <strain>IAI39 / ExPEC</strain>
    </source>
</reference>
<feature type="chain" id="PRO_1000199724" description="UPF0370 protein YpfN">
    <location>
        <begin position="1"/>
        <end position="66"/>
    </location>
</feature>
<feature type="transmembrane region" description="Helical" evidence="1">
    <location>
        <begin position="4"/>
        <end position="24"/>
    </location>
</feature>
<feature type="region of interest" description="Disordered" evidence="2">
    <location>
        <begin position="39"/>
        <end position="66"/>
    </location>
</feature>
<feature type="compositionally biased region" description="Basic and acidic residues" evidence="2">
    <location>
        <begin position="42"/>
        <end position="51"/>
    </location>
</feature>
<accession>B7NQL0</accession>
<gene>
    <name evidence="1" type="primary">ypfN</name>
    <name type="ordered locus">ECIAI39_2611</name>
</gene>
<name>YPFN_ECO7I</name>
<protein>
    <recommendedName>
        <fullName evidence="1">UPF0370 protein YpfN</fullName>
    </recommendedName>
</protein>